<dbReference type="EMBL" id="AF440571">
    <property type="protein sequence ID" value="AAL27725.1"/>
    <property type="molecule type" value="Genomic_DNA"/>
</dbReference>
<dbReference type="RefSeq" id="NP_445679.1">
    <property type="nucleotide sequence ID" value="NC_003214.2"/>
</dbReference>
<dbReference type="PDB" id="2H36">
    <property type="method" value="X-ray"/>
    <property type="resolution" value="2.95 A"/>
    <property type="chains" value="X=2-112"/>
</dbReference>
<dbReference type="PDBsum" id="2H36"/>
<dbReference type="SMR" id="Q914L6"/>
<dbReference type="GeneID" id="922304"/>
<dbReference type="KEGG" id="vg:922304"/>
<dbReference type="EvolutionaryTrace" id="Q914L6"/>
<dbReference type="Proteomes" id="UP000007017">
    <property type="component" value="Segment"/>
</dbReference>
<dbReference type="CDD" id="cd22267">
    <property type="entry name" value="AcrID1"/>
    <property type="match status" value="1"/>
</dbReference>
<dbReference type="Gene3D" id="3.30.160.300">
    <property type="match status" value="1"/>
</dbReference>
<dbReference type="InterPro" id="IPR009804">
    <property type="entry name" value="SIFV_Orf14"/>
</dbReference>
<dbReference type="NCBIfam" id="NF033952">
    <property type="entry name" value="AcrID1_fam"/>
    <property type="match status" value="1"/>
</dbReference>
<dbReference type="Pfam" id="PF07118">
    <property type="entry name" value="DUF1374"/>
    <property type="match status" value="1"/>
</dbReference>
<feature type="chain" id="PRO_0000385381" description="Uncharacterized protein 14">
    <location>
        <begin position="1"/>
        <end position="112"/>
    </location>
</feature>
<feature type="helix" evidence="1">
    <location>
        <begin position="6"/>
        <end position="10"/>
    </location>
</feature>
<feature type="helix" evidence="1">
    <location>
        <begin position="19"/>
        <end position="30"/>
    </location>
</feature>
<feature type="strand" evidence="1">
    <location>
        <begin position="37"/>
        <end position="49"/>
    </location>
</feature>
<feature type="helix" evidence="1">
    <location>
        <begin position="50"/>
        <end position="55"/>
    </location>
</feature>
<feature type="strand" evidence="1">
    <location>
        <begin position="61"/>
        <end position="66"/>
    </location>
</feature>
<feature type="strand" evidence="1">
    <location>
        <begin position="71"/>
        <end position="79"/>
    </location>
</feature>
<feature type="strand" evidence="1">
    <location>
        <begin position="81"/>
        <end position="83"/>
    </location>
</feature>
<feature type="strand" evidence="1">
    <location>
        <begin position="85"/>
        <end position="109"/>
    </location>
</feature>
<organism>
    <name type="scientific">Sulfolobus islandicus filamentous virus (isolate Iceland/Hveragerdi)</name>
    <name type="common">SIFV</name>
    <dbReference type="NCBI Taxonomy" id="654908"/>
    <lineage>
        <taxon>Viruses</taxon>
        <taxon>Adnaviria</taxon>
        <taxon>Zilligvirae</taxon>
        <taxon>Taleaviricota</taxon>
        <taxon>Tokiviricetes</taxon>
        <taxon>Ligamenvirales</taxon>
        <taxon>Lipothrixviridae</taxon>
        <taxon>Betalipothrixvirus</taxon>
        <taxon>Sulfolobus islandicus filamentous virus</taxon>
    </lineage>
</organism>
<protein>
    <recommendedName>
        <fullName>Uncharacterized protein 14</fullName>
    </recommendedName>
</protein>
<sequence>MEKQDLEKIESDIINDWTEADDLDDALDFLFMEKVSEFKIKFKDPLKVTEEEYRELLGNYDSSNSVSSNGITIDQYTYDEDDDIMYKLEFTYRKEDNKIYIYEVQGWREKKK</sequence>
<proteinExistence type="evidence at protein level"/>
<name>Y014_SIFVH</name>
<organismHost>
    <name type="scientific">Saccharolobus islandicus</name>
    <name type="common">Sulfolobus islandicus</name>
    <dbReference type="NCBI Taxonomy" id="43080"/>
</organismHost>
<reference key="1">
    <citation type="journal article" date="2000" name="Virology">
        <title>A novel lipothrixvirus, SIFV, of the extremely thermophilic crenarchaeon Sulfolobus.</title>
        <authorList>
            <person name="Arnold H.P."/>
            <person name="Zillig W."/>
            <person name="Ziese U."/>
            <person name="Holz I."/>
            <person name="Crosby M."/>
            <person name="Utterback T."/>
            <person name="Weidmann J.F."/>
            <person name="Umayam L.A."/>
            <person name="Teffera K."/>
            <person name="Kristjanson J.K."/>
            <person name="Klenk H.P."/>
            <person name="Nelson K.E."/>
            <person name="Fraser C.M."/>
        </authorList>
    </citation>
    <scope>NUCLEOTIDE SEQUENCE [GENOMIC DNA]</scope>
</reference>
<keyword id="KW-0002">3D-structure</keyword>
<keyword id="KW-1185">Reference proteome</keyword>
<accession>Q914L6</accession>
<evidence type="ECO:0007829" key="1">
    <source>
        <dbReference type="PDB" id="2H36"/>
    </source>
</evidence>
<gene>
    <name type="primary">SIFV0014</name>
</gene>